<reference key="1">
    <citation type="journal article" date="2003" name="Nature">
        <title>The DNA sequence of human chromosome 7.</title>
        <authorList>
            <person name="Hillier L.W."/>
            <person name="Fulton R.S."/>
            <person name="Fulton L.A."/>
            <person name="Graves T.A."/>
            <person name="Pepin K.H."/>
            <person name="Wagner-McPherson C."/>
            <person name="Layman D."/>
            <person name="Maas J."/>
            <person name="Jaeger S."/>
            <person name="Walker R."/>
            <person name="Wylie K."/>
            <person name="Sekhon M."/>
            <person name="Becker M.C."/>
            <person name="O'Laughlin M.D."/>
            <person name="Schaller M.E."/>
            <person name="Fewell G.A."/>
            <person name="Delehaunty K.D."/>
            <person name="Miner T.L."/>
            <person name="Nash W.E."/>
            <person name="Cordes M."/>
            <person name="Du H."/>
            <person name="Sun H."/>
            <person name="Edwards J."/>
            <person name="Bradshaw-Cordum H."/>
            <person name="Ali J."/>
            <person name="Andrews S."/>
            <person name="Isak A."/>
            <person name="Vanbrunt A."/>
            <person name="Nguyen C."/>
            <person name="Du F."/>
            <person name="Lamar B."/>
            <person name="Courtney L."/>
            <person name="Kalicki J."/>
            <person name="Ozersky P."/>
            <person name="Bielicki L."/>
            <person name="Scott K."/>
            <person name="Holmes A."/>
            <person name="Harkins R."/>
            <person name="Harris A."/>
            <person name="Strong C.M."/>
            <person name="Hou S."/>
            <person name="Tomlinson C."/>
            <person name="Dauphin-Kohlberg S."/>
            <person name="Kozlowicz-Reilly A."/>
            <person name="Leonard S."/>
            <person name="Rohlfing T."/>
            <person name="Rock S.M."/>
            <person name="Tin-Wollam A.-M."/>
            <person name="Abbott A."/>
            <person name="Minx P."/>
            <person name="Maupin R."/>
            <person name="Strowmatt C."/>
            <person name="Latreille P."/>
            <person name="Miller N."/>
            <person name="Johnson D."/>
            <person name="Murray J."/>
            <person name="Woessner J.P."/>
            <person name="Wendl M.C."/>
            <person name="Yang S.-P."/>
            <person name="Schultz B.R."/>
            <person name="Wallis J.W."/>
            <person name="Spieth J."/>
            <person name="Bieri T.A."/>
            <person name="Nelson J.O."/>
            <person name="Berkowicz N."/>
            <person name="Wohldmann P.E."/>
            <person name="Cook L.L."/>
            <person name="Hickenbotham M.T."/>
            <person name="Eldred J."/>
            <person name="Williams D."/>
            <person name="Bedell J.A."/>
            <person name="Mardis E.R."/>
            <person name="Clifton S.W."/>
            <person name="Chissoe S.L."/>
            <person name="Marra M.A."/>
            <person name="Raymond C."/>
            <person name="Haugen E."/>
            <person name="Gillett W."/>
            <person name="Zhou Y."/>
            <person name="James R."/>
            <person name="Phelps K."/>
            <person name="Iadanoto S."/>
            <person name="Bubb K."/>
            <person name="Simms E."/>
            <person name="Levy R."/>
            <person name="Clendenning J."/>
            <person name="Kaul R."/>
            <person name="Kent W.J."/>
            <person name="Furey T.S."/>
            <person name="Baertsch R.A."/>
            <person name="Brent M.R."/>
            <person name="Keibler E."/>
            <person name="Flicek P."/>
            <person name="Bork P."/>
            <person name="Suyama M."/>
            <person name="Bailey J.A."/>
            <person name="Portnoy M.E."/>
            <person name="Torrents D."/>
            <person name="Chinwalla A.T."/>
            <person name="Gish W.R."/>
            <person name="Eddy S.R."/>
            <person name="McPherson J.D."/>
            <person name="Olson M.V."/>
            <person name="Eichler E.E."/>
            <person name="Green E.D."/>
            <person name="Waterston R.H."/>
            <person name="Wilson R.K."/>
        </authorList>
    </citation>
    <scope>NUCLEOTIDE SEQUENCE [LARGE SCALE GENOMIC DNA]</scope>
</reference>
<proteinExistence type="inferred from homology"/>
<dbReference type="EMBL" id="AC004980">
    <property type="status" value="NOT_ANNOTATED_CDS"/>
    <property type="molecule type" value="Genomic_DNA"/>
</dbReference>
<dbReference type="CCDS" id="CCDS94129.1"/>
<dbReference type="RefSeq" id="NP_001381872.1">
    <property type="nucleotide sequence ID" value="NM_001394943.1"/>
</dbReference>
<dbReference type="SMR" id="A6NNV3"/>
<dbReference type="BioGRID" id="3194700">
    <property type="interactions" value="2"/>
</dbReference>
<dbReference type="FunCoup" id="A6NNV3">
    <property type="interactions" value="158"/>
</dbReference>
<dbReference type="STRING" id="9606.ENSP00000487772"/>
<dbReference type="BioMuta" id="SPDYE16"/>
<dbReference type="MassIVE" id="A6NNV3"/>
<dbReference type="PeptideAtlas" id="A6NNV3"/>
<dbReference type="DNASU" id="102723555"/>
<dbReference type="Ensembl" id="ENST00000632547.2">
    <property type="protein sequence ID" value="ENSP00000488034.1"/>
    <property type="gene ID" value="ENSG00000185040.14"/>
</dbReference>
<dbReference type="Ensembl" id="ENST00000633306.2">
    <property type="protein sequence ID" value="ENSP00000487772.2"/>
    <property type="gene ID" value="ENSG00000185040.14"/>
</dbReference>
<dbReference type="GeneID" id="102723555"/>
<dbReference type="MANE-Select" id="ENST00000633306.2">
    <property type="protein sequence ID" value="ENSP00000487772.2"/>
    <property type="RefSeq nucleotide sequence ID" value="NM_001394943.1"/>
    <property type="RefSeq protein sequence ID" value="NP_001381872.1"/>
</dbReference>
<dbReference type="AGR" id="HGNC:51512"/>
<dbReference type="GeneCards" id="SPDYE16"/>
<dbReference type="HGNC" id="HGNC:51512">
    <property type="gene designation" value="SPDYE16"/>
</dbReference>
<dbReference type="HPA" id="ENSG00000185040">
    <property type="expression patterns" value="Low tissue specificity"/>
</dbReference>
<dbReference type="neXtProt" id="NX_A6NNV3"/>
<dbReference type="VEuPathDB" id="HostDB:ENSG00000185040"/>
<dbReference type="GeneTree" id="ENSGT00940000154173"/>
<dbReference type="InParanoid" id="A6NNV3"/>
<dbReference type="OrthoDB" id="9536938at2759"/>
<dbReference type="PAN-GO" id="A6NNV3">
    <property type="GO annotations" value="1 GO annotation based on evolutionary models"/>
</dbReference>
<dbReference type="PhylomeDB" id="A6NNV3"/>
<dbReference type="PathwayCommons" id="A6NNV3"/>
<dbReference type="BioGRID-ORCS" id="102723555">
    <property type="hits" value="2 hits in 11 CRISPR screens"/>
</dbReference>
<dbReference type="GenomeRNAi" id="102723555"/>
<dbReference type="Pharos" id="A6NNV3">
    <property type="development level" value="Tdark"/>
</dbReference>
<dbReference type="PRO" id="PR:A6NNV3"/>
<dbReference type="Proteomes" id="UP000005640">
    <property type="component" value="Chromosome 7"/>
</dbReference>
<dbReference type="RNAct" id="A6NNV3">
    <property type="molecule type" value="protein"/>
</dbReference>
<dbReference type="Bgee" id="ENSG00000185040">
    <property type="expression patterns" value="Expressed in male germ line stem cell (sensu Vertebrata) in testis and 103 other cell types or tissues"/>
</dbReference>
<dbReference type="ExpressionAtlas" id="A6NNV3">
    <property type="expression patterns" value="baseline and differential"/>
</dbReference>
<dbReference type="GO" id="GO:0019901">
    <property type="term" value="F:protein kinase binding"/>
    <property type="evidence" value="ECO:0000318"/>
    <property type="project" value="GO_Central"/>
</dbReference>
<dbReference type="InterPro" id="IPR020984">
    <property type="entry name" value="Speedy"/>
</dbReference>
<dbReference type="PANTHER" id="PTHR31156">
    <property type="entry name" value="WBSCR19-LIKE PROTEIN"/>
    <property type="match status" value="1"/>
</dbReference>
<dbReference type="Pfam" id="PF11357">
    <property type="entry name" value="Spy1"/>
    <property type="match status" value="1"/>
</dbReference>
<feature type="chain" id="PRO_0000341229" description="Speedy protein E16">
    <location>
        <begin position="1"/>
        <end position="352"/>
    </location>
</feature>
<feature type="region of interest" description="Disordered" evidence="1">
    <location>
        <begin position="1"/>
        <end position="90"/>
    </location>
</feature>
<feature type="compositionally biased region" description="Polar residues" evidence="1">
    <location>
        <begin position="18"/>
        <end position="40"/>
    </location>
</feature>
<feature type="compositionally biased region" description="Acidic residues" evidence="1">
    <location>
        <begin position="76"/>
        <end position="90"/>
    </location>
</feature>
<evidence type="ECO:0000256" key="1">
    <source>
        <dbReference type="SAM" id="MobiDB-lite"/>
    </source>
</evidence>
<evidence type="ECO:0000305" key="2"/>
<evidence type="ECO:0000312" key="3">
    <source>
        <dbReference type="HGNC" id="HGNC:51512"/>
    </source>
</evidence>
<organism>
    <name type="scientific">Homo sapiens</name>
    <name type="common">Human</name>
    <dbReference type="NCBI Taxonomy" id="9606"/>
    <lineage>
        <taxon>Eukaryota</taxon>
        <taxon>Metazoa</taxon>
        <taxon>Chordata</taxon>
        <taxon>Craniata</taxon>
        <taxon>Vertebrata</taxon>
        <taxon>Euteleostomi</taxon>
        <taxon>Mammalia</taxon>
        <taxon>Eutheria</taxon>
        <taxon>Euarchontoglires</taxon>
        <taxon>Primates</taxon>
        <taxon>Haplorrhini</taxon>
        <taxon>Catarrhini</taxon>
        <taxon>Hominidae</taxon>
        <taxon>Homo</taxon>
    </lineage>
</organism>
<protein>
    <recommendedName>
        <fullName evidence="2">Speedy protein E16</fullName>
    </recommendedName>
    <alternativeName>
        <fullName>Speedy/RINGO cell cycle regulator family member E16</fullName>
    </alternativeName>
</protein>
<comment type="similarity">
    <text evidence="2">Belongs to the Speedy/Ringo family.</text>
</comment>
<name>SPD16_HUMAN</name>
<accession>A6NNV3</accession>
<sequence>MDRTETRFRKRGQIKGKITTSRQPHPQNEQSPQRSTSGYSLQEVVDDEVLGSSAPGVDPSPPCRSLGWKRKKEWSDESEEEPEKELAPEPEETWVVEMLCGLKMKLKQQRVSPILPEHHKDFNSQLAPGVDPSPPHRSFCWKRKREWWDESEESLEEEPRKVLAPEPEEIWVVEMLCGLKMKLKRRRVSLVLPEHHEAFNRLLEDPVIKRFLAWDKDLRVSDKYLLAMVIAYFSRAGLPSWQYQRIHFFLALYLANDMEEDDEDPKQNIFYFLYGKTRSRIPLVRNRRFQLCRCMNPRARKNRSQIALFQKLRFQFFCSMSGRAWVSREELEEIQAYDPEHWVWARDRARLS</sequence>
<gene>
    <name evidence="3" type="primary">SPDYE16</name>
</gene>
<keyword id="KW-1185">Reference proteome</keyword>